<proteinExistence type="inferred from homology"/>
<accession>P94507</accession>
<name>UPPP_BACSU</name>
<organism>
    <name type="scientific">Bacillus subtilis (strain 168)</name>
    <dbReference type="NCBI Taxonomy" id="224308"/>
    <lineage>
        <taxon>Bacteria</taxon>
        <taxon>Bacillati</taxon>
        <taxon>Bacillota</taxon>
        <taxon>Bacilli</taxon>
        <taxon>Bacillales</taxon>
        <taxon>Bacillaceae</taxon>
        <taxon>Bacillus</taxon>
    </lineage>
</organism>
<reference key="1">
    <citation type="journal article" date="1997" name="Nature">
        <title>The complete genome sequence of the Gram-positive bacterium Bacillus subtilis.</title>
        <authorList>
            <person name="Kunst F."/>
            <person name="Ogasawara N."/>
            <person name="Moszer I."/>
            <person name="Albertini A.M."/>
            <person name="Alloni G."/>
            <person name="Azevedo V."/>
            <person name="Bertero M.G."/>
            <person name="Bessieres P."/>
            <person name="Bolotin A."/>
            <person name="Borchert S."/>
            <person name="Borriss R."/>
            <person name="Boursier L."/>
            <person name="Brans A."/>
            <person name="Braun M."/>
            <person name="Brignell S.C."/>
            <person name="Bron S."/>
            <person name="Brouillet S."/>
            <person name="Bruschi C.V."/>
            <person name="Caldwell B."/>
            <person name="Capuano V."/>
            <person name="Carter N.M."/>
            <person name="Choi S.-K."/>
            <person name="Codani J.-J."/>
            <person name="Connerton I.F."/>
            <person name="Cummings N.J."/>
            <person name="Daniel R.A."/>
            <person name="Denizot F."/>
            <person name="Devine K.M."/>
            <person name="Duesterhoeft A."/>
            <person name="Ehrlich S.D."/>
            <person name="Emmerson P.T."/>
            <person name="Entian K.-D."/>
            <person name="Errington J."/>
            <person name="Fabret C."/>
            <person name="Ferrari E."/>
            <person name="Foulger D."/>
            <person name="Fritz C."/>
            <person name="Fujita M."/>
            <person name="Fujita Y."/>
            <person name="Fuma S."/>
            <person name="Galizzi A."/>
            <person name="Galleron N."/>
            <person name="Ghim S.-Y."/>
            <person name="Glaser P."/>
            <person name="Goffeau A."/>
            <person name="Golightly E.J."/>
            <person name="Grandi G."/>
            <person name="Guiseppi G."/>
            <person name="Guy B.J."/>
            <person name="Haga K."/>
            <person name="Haiech J."/>
            <person name="Harwood C.R."/>
            <person name="Henaut A."/>
            <person name="Hilbert H."/>
            <person name="Holsappel S."/>
            <person name="Hosono S."/>
            <person name="Hullo M.-F."/>
            <person name="Itaya M."/>
            <person name="Jones L.-M."/>
            <person name="Joris B."/>
            <person name="Karamata D."/>
            <person name="Kasahara Y."/>
            <person name="Klaerr-Blanchard M."/>
            <person name="Klein C."/>
            <person name="Kobayashi Y."/>
            <person name="Koetter P."/>
            <person name="Koningstein G."/>
            <person name="Krogh S."/>
            <person name="Kumano M."/>
            <person name="Kurita K."/>
            <person name="Lapidus A."/>
            <person name="Lardinois S."/>
            <person name="Lauber J."/>
            <person name="Lazarevic V."/>
            <person name="Lee S.-M."/>
            <person name="Levine A."/>
            <person name="Liu H."/>
            <person name="Masuda S."/>
            <person name="Mauel C."/>
            <person name="Medigue C."/>
            <person name="Medina N."/>
            <person name="Mellado R.P."/>
            <person name="Mizuno M."/>
            <person name="Moestl D."/>
            <person name="Nakai S."/>
            <person name="Noback M."/>
            <person name="Noone D."/>
            <person name="O'Reilly M."/>
            <person name="Ogawa K."/>
            <person name="Ogiwara A."/>
            <person name="Oudega B."/>
            <person name="Park S.-H."/>
            <person name="Parro V."/>
            <person name="Pohl T.M."/>
            <person name="Portetelle D."/>
            <person name="Porwollik S."/>
            <person name="Prescott A.M."/>
            <person name="Presecan E."/>
            <person name="Pujic P."/>
            <person name="Purnelle B."/>
            <person name="Rapoport G."/>
            <person name="Rey M."/>
            <person name="Reynolds S."/>
            <person name="Rieger M."/>
            <person name="Rivolta C."/>
            <person name="Rocha E."/>
            <person name="Roche B."/>
            <person name="Rose M."/>
            <person name="Sadaie Y."/>
            <person name="Sato T."/>
            <person name="Scanlan E."/>
            <person name="Schleich S."/>
            <person name="Schroeter R."/>
            <person name="Scoffone F."/>
            <person name="Sekiguchi J."/>
            <person name="Sekowska A."/>
            <person name="Seror S.J."/>
            <person name="Serror P."/>
            <person name="Shin B.-S."/>
            <person name="Soldo B."/>
            <person name="Sorokin A."/>
            <person name="Tacconi E."/>
            <person name="Takagi T."/>
            <person name="Takahashi H."/>
            <person name="Takemaru K."/>
            <person name="Takeuchi M."/>
            <person name="Tamakoshi A."/>
            <person name="Tanaka T."/>
            <person name="Terpstra P."/>
            <person name="Tognoni A."/>
            <person name="Tosato V."/>
            <person name="Uchiyama S."/>
            <person name="Vandenbol M."/>
            <person name="Vannier F."/>
            <person name="Vassarotti A."/>
            <person name="Viari A."/>
            <person name="Wambutt R."/>
            <person name="Wedler E."/>
            <person name="Wedler H."/>
            <person name="Weitzenegger T."/>
            <person name="Winters P."/>
            <person name="Wipat A."/>
            <person name="Yamamoto H."/>
            <person name="Yamane K."/>
            <person name="Yasumoto K."/>
            <person name="Yata K."/>
            <person name="Yoshida K."/>
            <person name="Yoshikawa H.-F."/>
            <person name="Zumstein E."/>
            <person name="Yoshikawa H."/>
            <person name="Danchin A."/>
        </authorList>
    </citation>
    <scope>NUCLEOTIDE SEQUENCE [LARGE SCALE GENOMIC DNA]</scope>
    <source>
        <strain>168</strain>
    </source>
</reference>
<reference key="2">
    <citation type="submission" date="1997-02" db="EMBL/GenBank/DDBJ databases">
        <authorList>
            <person name="De Rossi E."/>
        </authorList>
    </citation>
    <scope>NUCLEOTIDE SEQUENCE [GENOMIC DNA] OF 31-276</scope>
    <source>
        <strain>PB1831</strain>
    </source>
</reference>
<gene>
    <name evidence="1" type="primary">uppP</name>
    <name type="synonym">bacA</name>
    <name type="synonym">upk</name>
    <name type="synonym">yubB</name>
    <name type="ordered locus">BSU31150</name>
</gene>
<keyword id="KW-0046">Antibiotic resistance</keyword>
<keyword id="KW-1003">Cell membrane</keyword>
<keyword id="KW-0133">Cell shape</keyword>
<keyword id="KW-0961">Cell wall biogenesis/degradation</keyword>
<keyword id="KW-0378">Hydrolase</keyword>
<keyword id="KW-0472">Membrane</keyword>
<keyword id="KW-0573">Peptidoglycan synthesis</keyword>
<keyword id="KW-1185">Reference proteome</keyword>
<keyword id="KW-0812">Transmembrane</keyword>
<keyword id="KW-1133">Transmembrane helix</keyword>
<evidence type="ECO:0000255" key="1">
    <source>
        <dbReference type="HAMAP-Rule" id="MF_01006"/>
    </source>
</evidence>
<evidence type="ECO:0000305" key="2"/>
<feature type="chain" id="PRO_0000151109" description="Undecaprenyl-diphosphatase">
    <location>
        <begin position="1"/>
        <end position="276"/>
    </location>
</feature>
<feature type="transmembrane region" description="Helical" evidence="1">
    <location>
        <begin position="48"/>
        <end position="68"/>
    </location>
</feature>
<feature type="transmembrane region" description="Helical" evidence="1">
    <location>
        <begin position="92"/>
        <end position="112"/>
    </location>
</feature>
<feature type="transmembrane region" description="Helical" evidence="1">
    <location>
        <begin position="119"/>
        <end position="139"/>
    </location>
</feature>
<feature type="transmembrane region" description="Helical" evidence="1">
    <location>
        <begin position="155"/>
        <end position="175"/>
    </location>
</feature>
<feature type="transmembrane region" description="Helical" evidence="1">
    <location>
        <begin position="196"/>
        <end position="216"/>
    </location>
</feature>
<feature type="transmembrane region" description="Helical" evidence="1">
    <location>
        <begin position="225"/>
        <end position="245"/>
    </location>
</feature>
<feature type="transmembrane region" description="Helical" evidence="1">
    <location>
        <begin position="255"/>
        <end position="275"/>
    </location>
</feature>
<comment type="function">
    <text evidence="1">Catalyzes the dephosphorylation of undecaprenyl diphosphate (UPP). Confers resistance to bacitracin.</text>
</comment>
<comment type="catalytic activity">
    <reaction evidence="1">
        <text>di-trans,octa-cis-undecaprenyl diphosphate + H2O = di-trans,octa-cis-undecaprenyl phosphate + phosphate + H(+)</text>
        <dbReference type="Rhea" id="RHEA:28094"/>
        <dbReference type="ChEBI" id="CHEBI:15377"/>
        <dbReference type="ChEBI" id="CHEBI:15378"/>
        <dbReference type="ChEBI" id="CHEBI:43474"/>
        <dbReference type="ChEBI" id="CHEBI:58405"/>
        <dbReference type="ChEBI" id="CHEBI:60392"/>
        <dbReference type="EC" id="3.6.1.27"/>
    </reaction>
</comment>
<comment type="subcellular location">
    <subcellularLocation>
        <location evidence="1">Cell membrane</location>
        <topology evidence="1">Multi-pass membrane protein</topology>
    </subcellularLocation>
</comment>
<comment type="miscellaneous">
    <text>Bacitracin is thought to be involved in the inhibition of peptidoglycan synthesis by sequestering undecaprenyl diphosphate, thereby reducing the pool of lipid carrier available.</text>
</comment>
<comment type="similarity">
    <text evidence="1">Belongs to the UppP family.</text>
</comment>
<comment type="sequence caution" evidence="2">
    <conflict type="erroneous initiation">
        <sequence resource="EMBL-CDS" id="AAB47703"/>
    </conflict>
</comment>
<protein>
    <recommendedName>
        <fullName evidence="1">Undecaprenyl-diphosphatase</fullName>
        <ecNumber evidence="1">3.6.1.27</ecNumber>
    </recommendedName>
    <alternativeName>
        <fullName evidence="1">Bacitracin resistance protein</fullName>
    </alternativeName>
    <alternativeName>
        <fullName evidence="1">Undecaprenyl pyrophosphate phosphatase</fullName>
    </alternativeName>
</protein>
<dbReference type="EC" id="3.6.1.27" evidence="1"/>
<dbReference type="EMBL" id="AL009126">
    <property type="protein sequence ID" value="CAB15093.1"/>
    <property type="molecule type" value="Genomic_DNA"/>
</dbReference>
<dbReference type="EMBL" id="U87792">
    <property type="protein sequence ID" value="AAB47703.1"/>
    <property type="status" value="ALT_INIT"/>
    <property type="molecule type" value="Genomic_DNA"/>
</dbReference>
<dbReference type="PIR" id="E70006">
    <property type="entry name" value="E70006"/>
</dbReference>
<dbReference type="RefSeq" id="NP_390993.1">
    <property type="nucleotide sequence ID" value="NC_000964.3"/>
</dbReference>
<dbReference type="RefSeq" id="WP_003243397.1">
    <property type="nucleotide sequence ID" value="NZ_OZ025638.1"/>
</dbReference>
<dbReference type="SMR" id="P94507"/>
<dbReference type="FunCoup" id="P94507">
    <property type="interactions" value="433"/>
</dbReference>
<dbReference type="STRING" id="224308.BSU31150"/>
<dbReference type="PaxDb" id="224308-BSU31150"/>
<dbReference type="EnsemblBacteria" id="CAB15093">
    <property type="protein sequence ID" value="CAB15093"/>
    <property type="gene ID" value="BSU_31150"/>
</dbReference>
<dbReference type="GeneID" id="937148"/>
<dbReference type="KEGG" id="bsu:BSU31150"/>
<dbReference type="PATRIC" id="fig|224308.179.peg.3375"/>
<dbReference type="eggNOG" id="COG1968">
    <property type="taxonomic scope" value="Bacteria"/>
</dbReference>
<dbReference type="InParanoid" id="P94507"/>
<dbReference type="OrthoDB" id="9808289at2"/>
<dbReference type="PhylomeDB" id="P94507"/>
<dbReference type="BioCyc" id="BSUB:BSU31150-MONOMER"/>
<dbReference type="Proteomes" id="UP000001570">
    <property type="component" value="Chromosome"/>
</dbReference>
<dbReference type="GO" id="GO:0005886">
    <property type="term" value="C:plasma membrane"/>
    <property type="evidence" value="ECO:0000318"/>
    <property type="project" value="GO_Central"/>
</dbReference>
<dbReference type="GO" id="GO:0050380">
    <property type="term" value="F:undecaprenyl-diphosphatase activity"/>
    <property type="evidence" value="ECO:0000318"/>
    <property type="project" value="GO_Central"/>
</dbReference>
<dbReference type="GO" id="GO:0071555">
    <property type="term" value="P:cell wall organization"/>
    <property type="evidence" value="ECO:0007669"/>
    <property type="project" value="UniProtKB-KW"/>
</dbReference>
<dbReference type="GO" id="GO:0009252">
    <property type="term" value="P:peptidoglycan biosynthetic process"/>
    <property type="evidence" value="ECO:0007669"/>
    <property type="project" value="UniProtKB-KW"/>
</dbReference>
<dbReference type="GO" id="GO:0000270">
    <property type="term" value="P:peptidoglycan metabolic process"/>
    <property type="evidence" value="ECO:0000318"/>
    <property type="project" value="GO_Central"/>
</dbReference>
<dbReference type="GO" id="GO:0008360">
    <property type="term" value="P:regulation of cell shape"/>
    <property type="evidence" value="ECO:0007669"/>
    <property type="project" value="UniProtKB-KW"/>
</dbReference>
<dbReference type="GO" id="GO:0046677">
    <property type="term" value="P:response to antibiotic"/>
    <property type="evidence" value="ECO:0007669"/>
    <property type="project" value="UniProtKB-UniRule"/>
</dbReference>
<dbReference type="HAMAP" id="MF_01006">
    <property type="entry name" value="Undec_diphosphatase"/>
    <property type="match status" value="1"/>
</dbReference>
<dbReference type="InterPro" id="IPR003824">
    <property type="entry name" value="UppP"/>
</dbReference>
<dbReference type="NCBIfam" id="NF001389">
    <property type="entry name" value="PRK00281.1-2"/>
    <property type="match status" value="1"/>
</dbReference>
<dbReference type="NCBIfam" id="NF001390">
    <property type="entry name" value="PRK00281.1-4"/>
    <property type="match status" value="1"/>
</dbReference>
<dbReference type="NCBIfam" id="TIGR00753">
    <property type="entry name" value="undec_PP_bacA"/>
    <property type="match status" value="1"/>
</dbReference>
<dbReference type="PANTHER" id="PTHR30622">
    <property type="entry name" value="UNDECAPRENYL-DIPHOSPHATASE"/>
    <property type="match status" value="1"/>
</dbReference>
<dbReference type="PANTHER" id="PTHR30622:SF3">
    <property type="entry name" value="UNDECAPRENYL-DIPHOSPHATASE"/>
    <property type="match status" value="1"/>
</dbReference>
<dbReference type="Pfam" id="PF02673">
    <property type="entry name" value="BacA"/>
    <property type="match status" value="1"/>
</dbReference>
<sequence>MTLWELFVAAILGIVEGLTEYAPVSSTGHMIIVDDIWLKSSNLMSEEAANSFKVVIQLGSILAVAIVFKDRILNLLGLKKNITSDQEQGHKLSIAQIAVGLVPAAVLGFLFEDYIDEYLFSVKTVAIGLIAGAILMLFADWVNKRKTATDTLDRISYKQAIAVGLFQCLSLWPGFSRSGSTISGGVILGLNHRAAADFTFIMAMPIMMGASFLSLVKHWDSLSSDLMPFFIVGFICAFVVALFVVRFFLRLINKIKLVPFAIYRIILGVILLLIMM</sequence>